<keyword id="KW-0027">Amidation</keyword>
<keyword id="KW-0372">Hormone</keyword>
<keyword id="KW-1185">Reference proteome</keyword>
<keyword id="KW-0964">Secreted</keyword>
<keyword id="KW-0732">Signal</keyword>
<organism>
    <name type="scientific">Bos taurus</name>
    <name type="common">Bovine</name>
    <dbReference type="NCBI Taxonomy" id="9913"/>
    <lineage>
        <taxon>Eukaryota</taxon>
        <taxon>Metazoa</taxon>
        <taxon>Chordata</taxon>
        <taxon>Craniata</taxon>
        <taxon>Vertebrata</taxon>
        <taxon>Euteleostomi</taxon>
        <taxon>Mammalia</taxon>
        <taxon>Eutheria</taxon>
        <taxon>Laurasiatheria</taxon>
        <taxon>Artiodactyla</taxon>
        <taxon>Ruminantia</taxon>
        <taxon>Pecora</taxon>
        <taxon>Bovidae</taxon>
        <taxon>Bovinae</taxon>
        <taxon>Bos</taxon>
    </lineage>
</organism>
<dbReference type="EMBL" id="BC114855">
    <property type="protein sequence ID" value="AAI14856.1"/>
    <property type="molecule type" value="mRNA"/>
</dbReference>
<dbReference type="RefSeq" id="NP_001069995.1">
    <property type="nucleotide sequence ID" value="NM_001076527.1"/>
</dbReference>
<dbReference type="SMR" id="Q1RMJ9"/>
<dbReference type="FunCoup" id="Q1RMJ9">
    <property type="interactions" value="1"/>
</dbReference>
<dbReference type="STRING" id="9913.ENSBTAP00000046927"/>
<dbReference type="PaxDb" id="9913-ENSBTAP00000046927"/>
<dbReference type="Ensembl" id="ENSBTAT00000050183.3">
    <property type="protein sequence ID" value="ENSBTAP00000046927.3"/>
    <property type="gene ID" value="ENSBTAG00000035696.3"/>
</dbReference>
<dbReference type="GeneID" id="751573"/>
<dbReference type="KEGG" id="bta:751573"/>
<dbReference type="CTD" id="114131"/>
<dbReference type="VEuPathDB" id="HostDB:ENSBTAG00000035696"/>
<dbReference type="VGNC" id="VGNC:36639">
    <property type="gene designation" value="UCN3"/>
</dbReference>
<dbReference type="eggNOG" id="ENOG502S1WZ">
    <property type="taxonomic scope" value="Eukaryota"/>
</dbReference>
<dbReference type="GeneTree" id="ENSGT00940000160568"/>
<dbReference type="InParanoid" id="Q1RMJ9"/>
<dbReference type="OMA" id="FPGEGHY"/>
<dbReference type="OrthoDB" id="9949770at2759"/>
<dbReference type="Reactome" id="R-BTA-373080">
    <property type="pathway name" value="Class B/2 (Secretin family receptors)"/>
</dbReference>
<dbReference type="Proteomes" id="UP000009136">
    <property type="component" value="Chromosome 13"/>
</dbReference>
<dbReference type="Bgee" id="ENSBTAG00000035696">
    <property type="expression patterns" value="Expressed in midbrain and 2 other cell types or tissues"/>
</dbReference>
<dbReference type="GO" id="GO:0005615">
    <property type="term" value="C:extracellular space"/>
    <property type="evidence" value="ECO:0000318"/>
    <property type="project" value="GO_Central"/>
</dbReference>
<dbReference type="GO" id="GO:0051431">
    <property type="term" value="F:corticotropin-releasing hormone receptor 2 binding"/>
    <property type="evidence" value="ECO:0007669"/>
    <property type="project" value="InterPro"/>
</dbReference>
<dbReference type="GO" id="GO:0051429">
    <property type="term" value="F:corticotropin-releasing hormone receptor binding"/>
    <property type="evidence" value="ECO:0000318"/>
    <property type="project" value="GO_Central"/>
</dbReference>
<dbReference type="GO" id="GO:0005179">
    <property type="term" value="F:hormone activity"/>
    <property type="evidence" value="ECO:0007669"/>
    <property type="project" value="UniProtKB-KW"/>
</dbReference>
<dbReference type="GO" id="GO:0007189">
    <property type="term" value="P:adenylate cyclase-activating G protein-coupled receptor signaling pathway"/>
    <property type="evidence" value="ECO:0000318"/>
    <property type="project" value="GO_Central"/>
</dbReference>
<dbReference type="GO" id="GO:0031669">
    <property type="term" value="P:cellular response to nutrient levels"/>
    <property type="evidence" value="ECO:0000318"/>
    <property type="project" value="GO_Central"/>
</dbReference>
<dbReference type="GO" id="GO:0007586">
    <property type="term" value="P:digestion"/>
    <property type="evidence" value="ECO:0007669"/>
    <property type="project" value="InterPro"/>
</dbReference>
<dbReference type="GO" id="GO:0009755">
    <property type="term" value="P:hormone-mediated signaling pathway"/>
    <property type="evidence" value="ECO:0000318"/>
    <property type="project" value="GO_Central"/>
</dbReference>
<dbReference type="InterPro" id="IPR000187">
    <property type="entry name" value="CRF"/>
</dbReference>
<dbReference type="InterPro" id="IPR024270">
    <property type="entry name" value="Urocortin_II/III"/>
</dbReference>
<dbReference type="PANTHER" id="PTHR17575">
    <property type="entry name" value="UROCORTIN-2 AND 3"/>
    <property type="match status" value="1"/>
</dbReference>
<dbReference type="PANTHER" id="PTHR17575:SF1">
    <property type="entry name" value="UROCORTIN-3"/>
    <property type="match status" value="1"/>
</dbReference>
<dbReference type="Pfam" id="PF00473">
    <property type="entry name" value="CRF"/>
    <property type="match status" value="1"/>
</dbReference>
<comment type="function">
    <text evidence="1">Suppresses food intake, delays gastric emptying and decreases heat-induced edema. Might represent an endogenous ligand for maintaining homeostasis after stress (By similarity).</text>
</comment>
<comment type="subunit">
    <text evidence="1">Binds with high affinity to CRF receptors 2-alpha and 2-beta.</text>
</comment>
<comment type="subcellular location">
    <subcellularLocation>
        <location evidence="1">Secreted</location>
    </subcellularLocation>
</comment>
<comment type="similarity">
    <text evidence="4">Belongs to the sauvagine/corticotropin-releasing factor/urotensin I family.</text>
</comment>
<name>UCN3_BOVIN</name>
<accession>Q1RMJ9</accession>
<gene>
    <name type="primary">UCN3</name>
    <name type="synonym">SPC</name>
</gene>
<feature type="signal peptide" evidence="2">
    <location>
        <begin position="1"/>
        <end position="23"/>
    </location>
</feature>
<feature type="propeptide" id="PRO_0000318943" evidence="1">
    <location>
        <begin position="24"/>
        <end position="123"/>
    </location>
</feature>
<feature type="chain" id="PRO_0000318944" description="Urocortin-3">
    <location>
        <begin position="125"/>
        <end position="162"/>
    </location>
</feature>
<feature type="region of interest" description="Disordered" evidence="3">
    <location>
        <begin position="41"/>
        <end position="123"/>
    </location>
</feature>
<feature type="compositionally biased region" description="Basic and acidic residues" evidence="3">
    <location>
        <begin position="41"/>
        <end position="51"/>
    </location>
</feature>
<feature type="compositionally biased region" description="Acidic residues" evidence="3">
    <location>
        <begin position="68"/>
        <end position="77"/>
    </location>
</feature>
<feature type="compositionally biased region" description="Gly residues" evidence="3">
    <location>
        <begin position="86"/>
        <end position="96"/>
    </location>
</feature>
<feature type="compositionally biased region" description="Basic and acidic residues" evidence="3">
    <location>
        <begin position="113"/>
        <end position="123"/>
    </location>
</feature>
<feature type="modified residue" description="Isoleucine amide" evidence="2">
    <location>
        <position position="162"/>
    </location>
</feature>
<protein>
    <recommendedName>
        <fullName>Urocortin-3</fullName>
    </recommendedName>
    <alternativeName>
        <fullName>Urocortin III</fullName>
        <shortName>Ucn III</shortName>
    </alternativeName>
</protein>
<proteinExistence type="evidence at transcript level"/>
<reference key="1">
    <citation type="submission" date="2006-04" db="EMBL/GenBank/DDBJ databases">
        <authorList>
            <consortium name="NIH - Mammalian Gene Collection (MGC) project"/>
        </authorList>
    </citation>
    <scope>NUCLEOTIDE SEQUENCE [LARGE SCALE MRNA]</scope>
    <source>
        <strain>Hereford</strain>
        <tissue>Hypothalamus</tissue>
    </source>
</reference>
<evidence type="ECO:0000250" key="1"/>
<evidence type="ECO:0000255" key="2"/>
<evidence type="ECO:0000256" key="3">
    <source>
        <dbReference type="SAM" id="MobiDB-lite"/>
    </source>
</evidence>
<evidence type="ECO:0000305" key="4"/>
<sequence>MLVPAPFLLVLLLLLGAPQVGLSQRSPKAGSSPSCLHTALREAEKSQRKDTSLLIKRTFPALPRGDPEDQEGQEEEDTEKRTFPGSVGGGGGGGAGSTRYKYPSQAQFQGRPSQDKAKSDRRTKVTLSLDVPTNIMNILFNIAKAKNLRAKAAANAHLMAQIGRKK</sequence>